<comment type="function">
    <text evidence="1">Converts the aldose L-fucose into the corresponding ketose L-fuculose.</text>
</comment>
<comment type="catalytic activity">
    <reaction evidence="1">
        <text>L-fucose = L-fuculose</text>
        <dbReference type="Rhea" id="RHEA:17233"/>
        <dbReference type="ChEBI" id="CHEBI:2181"/>
        <dbReference type="ChEBI" id="CHEBI:17617"/>
        <dbReference type="EC" id="5.3.1.25"/>
    </reaction>
</comment>
<comment type="cofactor">
    <cofactor evidence="1">
        <name>Mn(2+)</name>
        <dbReference type="ChEBI" id="CHEBI:29035"/>
    </cofactor>
</comment>
<comment type="pathway">
    <text evidence="1">Carbohydrate degradation; L-fucose degradation; L-lactaldehyde and glycerone phosphate from L-fucose: step 1/3.</text>
</comment>
<comment type="subunit">
    <text evidence="1">Homohexamer.</text>
</comment>
<comment type="subcellular location">
    <subcellularLocation>
        <location evidence="1">Cytoplasm</location>
    </subcellularLocation>
</comment>
<comment type="similarity">
    <text evidence="1">Belongs to the L-fucose isomerase family.</text>
</comment>
<keyword id="KW-0119">Carbohydrate metabolism</keyword>
<keyword id="KW-0963">Cytoplasm</keyword>
<keyword id="KW-0294">Fucose metabolism</keyword>
<keyword id="KW-0413">Isomerase</keyword>
<keyword id="KW-0464">Manganese</keyword>
<keyword id="KW-0479">Metal-binding</keyword>
<name>FUCI_ECOHS</name>
<sequence length="591" mass="64977">MKKISLPKIGIRPVIDGRRMGVRESLEEQTMNMAKATAALLTEKLRHACGAAVECVISDTCIAGMAEAAACEEKFSSQNVGLTITVTPCWCYGSETIDMDPTRPKAIWGFNGTERPGAVYLAAALAAHSQKGIPAFSIYGHDVQDADDTSIPADVEEKLLRFARAGLAVASMKGKSYLSLGGVSMGIAGSIVDHNFFESWLGMKVQAVDMTELRRRIDQQIYDEAELEMALAWADKNFRYGEDENNKQYQRNAEQSRAVLRESLLMAMCIRDMMQGNSKLADIGRVEESLGYNAIAAGFQGQRHWTDQYPNGDTAEAILNSSFDWNGVREPFVVATENDSLNGVAMLMGHQLTGTAQVFADVRTYWSPEAIERVTGHKLDGLAEHGIIHLINSGSAALDGSCKQRDSEGNPTMKPHWEISQQEADACLAATEWCPAIHEYFRGGGYSSRFLTEGGVPFTMTRVNIIKGLGPVLQIAEGWSVELPKDVHDILNKRTNSTWPTTWFAPRLTGKGPFTDVYSVMANWGANHGVLTIGHVGADFITLASMLRIPVCMHNVEETKVYRPSAWAAHGMDIEGQDYRACQNYGPLYKR</sequence>
<protein>
    <recommendedName>
        <fullName evidence="1">L-fucose isomerase</fullName>
        <ecNumber evidence="1">5.3.1.25</ecNumber>
    </recommendedName>
    <alternativeName>
        <fullName evidence="1">6-deoxy-L-galactose isomerase</fullName>
    </alternativeName>
    <alternativeName>
        <fullName>FucIase</fullName>
    </alternativeName>
</protein>
<feature type="chain" id="PRO_1000067217" description="L-fucose isomerase">
    <location>
        <begin position="1"/>
        <end position="591"/>
    </location>
</feature>
<feature type="active site" description="Proton acceptor" evidence="1">
    <location>
        <position position="337"/>
    </location>
</feature>
<feature type="active site" description="Proton acceptor" evidence="1">
    <location>
        <position position="361"/>
    </location>
</feature>
<feature type="binding site" evidence="1">
    <location>
        <position position="337"/>
    </location>
    <ligand>
        <name>Mn(2+)</name>
        <dbReference type="ChEBI" id="CHEBI:29035"/>
    </ligand>
</feature>
<feature type="binding site" evidence="1">
    <location>
        <position position="361"/>
    </location>
    <ligand>
        <name>Mn(2+)</name>
        <dbReference type="ChEBI" id="CHEBI:29035"/>
    </ligand>
</feature>
<feature type="binding site" evidence="1">
    <location>
        <position position="528"/>
    </location>
    <ligand>
        <name>Mn(2+)</name>
        <dbReference type="ChEBI" id="CHEBI:29035"/>
    </ligand>
</feature>
<reference key="1">
    <citation type="journal article" date="2008" name="J. Bacteriol.">
        <title>The pangenome structure of Escherichia coli: comparative genomic analysis of E. coli commensal and pathogenic isolates.</title>
        <authorList>
            <person name="Rasko D.A."/>
            <person name="Rosovitz M.J."/>
            <person name="Myers G.S.A."/>
            <person name="Mongodin E.F."/>
            <person name="Fricke W.F."/>
            <person name="Gajer P."/>
            <person name="Crabtree J."/>
            <person name="Sebaihia M."/>
            <person name="Thomson N.R."/>
            <person name="Chaudhuri R."/>
            <person name="Henderson I.R."/>
            <person name="Sperandio V."/>
            <person name="Ravel J."/>
        </authorList>
    </citation>
    <scope>NUCLEOTIDE SEQUENCE [LARGE SCALE GENOMIC DNA]</scope>
    <source>
        <strain>HS</strain>
    </source>
</reference>
<evidence type="ECO:0000255" key="1">
    <source>
        <dbReference type="HAMAP-Rule" id="MF_01254"/>
    </source>
</evidence>
<accession>A8A3T7</accession>
<dbReference type="EC" id="5.3.1.25" evidence="1"/>
<dbReference type="EMBL" id="CP000802">
    <property type="protein sequence ID" value="ABV07191.1"/>
    <property type="molecule type" value="Genomic_DNA"/>
</dbReference>
<dbReference type="RefSeq" id="WP_000724176.1">
    <property type="nucleotide sequence ID" value="NC_009800.1"/>
</dbReference>
<dbReference type="SMR" id="A8A3T7"/>
<dbReference type="KEGG" id="ecx:EcHS_A2946"/>
<dbReference type="HOGENOM" id="CLU_033326_1_0_6"/>
<dbReference type="UniPathway" id="UPA00563">
    <property type="reaction ID" value="UER00624"/>
</dbReference>
<dbReference type="GO" id="GO:0005737">
    <property type="term" value="C:cytoplasm"/>
    <property type="evidence" value="ECO:0007669"/>
    <property type="project" value="UniProtKB-SubCell"/>
</dbReference>
<dbReference type="GO" id="GO:0008790">
    <property type="term" value="F:arabinose isomerase activity"/>
    <property type="evidence" value="ECO:0007669"/>
    <property type="project" value="TreeGrafter"/>
</dbReference>
<dbReference type="GO" id="GO:0008736">
    <property type="term" value="F:L-fucose isomerase activity"/>
    <property type="evidence" value="ECO:0007669"/>
    <property type="project" value="UniProtKB-UniRule"/>
</dbReference>
<dbReference type="GO" id="GO:0030145">
    <property type="term" value="F:manganese ion binding"/>
    <property type="evidence" value="ECO:0007669"/>
    <property type="project" value="UniProtKB-UniRule"/>
</dbReference>
<dbReference type="GO" id="GO:0019571">
    <property type="term" value="P:D-arabinose catabolic process"/>
    <property type="evidence" value="ECO:0007669"/>
    <property type="project" value="TreeGrafter"/>
</dbReference>
<dbReference type="GO" id="GO:0042355">
    <property type="term" value="P:L-fucose catabolic process"/>
    <property type="evidence" value="ECO:0007669"/>
    <property type="project" value="UniProtKB-UniRule"/>
</dbReference>
<dbReference type="CDD" id="cd03556">
    <property type="entry name" value="L-fucose_isomerase"/>
    <property type="match status" value="1"/>
</dbReference>
<dbReference type="FunFam" id="3.20.14.10:FF:000001">
    <property type="entry name" value="L-fucose isomerase"/>
    <property type="match status" value="1"/>
</dbReference>
<dbReference type="FunFam" id="3.40.275.10:FF:000001">
    <property type="entry name" value="L-fucose isomerase"/>
    <property type="match status" value="1"/>
</dbReference>
<dbReference type="FunFam" id="3.40.50.1070:FF:000001">
    <property type="entry name" value="L-fucose isomerase"/>
    <property type="match status" value="1"/>
</dbReference>
<dbReference type="Gene3D" id="3.40.50.1070">
    <property type="match status" value="1"/>
</dbReference>
<dbReference type="Gene3D" id="3.40.275.10">
    <property type="entry name" value="L-fucose Isomerase, Chain A, domain 2"/>
    <property type="match status" value="1"/>
</dbReference>
<dbReference type="Gene3D" id="3.20.14.10">
    <property type="entry name" value="L-fucose/L-arabinose isomerase, C-terminal"/>
    <property type="match status" value="1"/>
</dbReference>
<dbReference type="HAMAP" id="MF_01254">
    <property type="entry name" value="Fucose_iso"/>
    <property type="match status" value="1"/>
</dbReference>
<dbReference type="InterPro" id="IPR004216">
    <property type="entry name" value="Fuc/Ara_isomerase_C"/>
</dbReference>
<dbReference type="InterPro" id="IPR038393">
    <property type="entry name" value="Fuc_iso_dom3_sf"/>
</dbReference>
<dbReference type="InterPro" id="IPR015888">
    <property type="entry name" value="Fuc_isomerase_C"/>
</dbReference>
<dbReference type="InterPro" id="IPR038391">
    <property type="entry name" value="Fucose_iso_dom1_sf"/>
</dbReference>
<dbReference type="InterPro" id="IPR012888">
    <property type="entry name" value="Fucose_iso_N1"/>
</dbReference>
<dbReference type="InterPro" id="IPR005763">
    <property type="entry name" value="Fucose_isomerase"/>
</dbReference>
<dbReference type="InterPro" id="IPR038392">
    <property type="entry name" value="Fucose_isomerase_dom2_sf"/>
</dbReference>
<dbReference type="InterPro" id="IPR009015">
    <property type="entry name" value="Fucose_isomerase_N/cen_sf"/>
</dbReference>
<dbReference type="InterPro" id="IPR012889">
    <property type="entry name" value="Fucose_isomerase_N2"/>
</dbReference>
<dbReference type="NCBIfam" id="TIGR01089">
    <property type="entry name" value="fucI"/>
    <property type="match status" value="1"/>
</dbReference>
<dbReference type="NCBIfam" id="NF008220">
    <property type="entry name" value="PRK10991.1"/>
    <property type="match status" value="1"/>
</dbReference>
<dbReference type="PANTHER" id="PTHR37840">
    <property type="entry name" value="L-FUCOSE ISOMERASE"/>
    <property type="match status" value="1"/>
</dbReference>
<dbReference type="PANTHER" id="PTHR37840:SF1">
    <property type="entry name" value="L-FUCOSE ISOMERASE"/>
    <property type="match status" value="1"/>
</dbReference>
<dbReference type="Pfam" id="PF02952">
    <property type="entry name" value="Fucose_iso_C"/>
    <property type="match status" value="1"/>
</dbReference>
<dbReference type="Pfam" id="PF07881">
    <property type="entry name" value="Fucose_iso_N1"/>
    <property type="match status" value="1"/>
</dbReference>
<dbReference type="Pfam" id="PF07882">
    <property type="entry name" value="Fucose_iso_N2"/>
    <property type="match status" value="1"/>
</dbReference>
<dbReference type="SUPFAM" id="SSF50443">
    <property type="entry name" value="FucI/AraA C-terminal domain-like"/>
    <property type="match status" value="1"/>
</dbReference>
<dbReference type="SUPFAM" id="SSF53743">
    <property type="entry name" value="FucI/AraA N-terminal and middle domains"/>
    <property type="match status" value="1"/>
</dbReference>
<proteinExistence type="inferred from homology"/>
<gene>
    <name evidence="1" type="primary">fucI</name>
    <name type="ordered locus">EcHS_A2946</name>
</gene>
<organism>
    <name type="scientific">Escherichia coli O9:H4 (strain HS)</name>
    <dbReference type="NCBI Taxonomy" id="331112"/>
    <lineage>
        <taxon>Bacteria</taxon>
        <taxon>Pseudomonadati</taxon>
        <taxon>Pseudomonadota</taxon>
        <taxon>Gammaproteobacteria</taxon>
        <taxon>Enterobacterales</taxon>
        <taxon>Enterobacteriaceae</taxon>
        <taxon>Escherichia</taxon>
    </lineage>
</organism>